<reference key="1">
    <citation type="journal article" date="1999" name="Nature">
        <title>Sequence and analysis of chromosome 4 of the plant Arabidopsis thaliana.</title>
        <authorList>
            <person name="Mayer K.F.X."/>
            <person name="Schueller C."/>
            <person name="Wambutt R."/>
            <person name="Murphy G."/>
            <person name="Volckaert G."/>
            <person name="Pohl T."/>
            <person name="Duesterhoeft A."/>
            <person name="Stiekema W."/>
            <person name="Entian K.-D."/>
            <person name="Terryn N."/>
            <person name="Harris B."/>
            <person name="Ansorge W."/>
            <person name="Brandt P."/>
            <person name="Grivell L.A."/>
            <person name="Rieger M."/>
            <person name="Weichselgartner M."/>
            <person name="de Simone V."/>
            <person name="Obermaier B."/>
            <person name="Mache R."/>
            <person name="Mueller M."/>
            <person name="Kreis M."/>
            <person name="Delseny M."/>
            <person name="Puigdomenech P."/>
            <person name="Watson M."/>
            <person name="Schmidtheini T."/>
            <person name="Reichert B."/>
            <person name="Portetelle D."/>
            <person name="Perez-Alonso M."/>
            <person name="Boutry M."/>
            <person name="Bancroft I."/>
            <person name="Vos P."/>
            <person name="Hoheisel J."/>
            <person name="Zimmermann W."/>
            <person name="Wedler H."/>
            <person name="Ridley P."/>
            <person name="Langham S.-A."/>
            <person name="McCullagh B."/>
            <person name="Bilham L."/>
            <person name="Robben J."/>
            <person name="van der Schueren J."/>
            <person name="Grymonprez B."/>
            <person name="Chuang Y.-J."/>
            <person name="Vandenbussche F."/>
            <person name="Braeken M."/>
            <person name="Weltjens I."/>
            <person name="Voet M."/>
            <person name="Bastiaens I."/>
            <person name="Aert R."/>
            <person name="Defoor E."/>
            <person name="Weitzenegger T."/>
            <person name="Bothe G."/>
            <person name="Ramsperger U."/>
            <person name="Hilbert H."/>
            <person name="Braun M."/>
            <person name="Holzer E."/>
            <person name="Brandt A."/>
            <person name="Peters S."/>
            <person name="van Staveren M."/>
            <person name="Dirkse W."/>
            <person name="Mooijman P."/>
            <person name="Klein Lankhorst R."/>
            <person name="Rose M."/>
            <person name="Hauf J."/>
            <person name="Koetter P."/>
            <person name="Berneiser S."/>
            <person name="Hempel S."/>
            <person name="Feldpausch M."/>
            <person name="Lamberth S."/>
            <person name="Van den Daele H."/>
            <person name="De Keyser A."/>
            <person name="Buysshaert C."/>
            <person name="Gielen J."/>
            <person name="Villarroel R."/>
            <person name="De Clercq R."/>
            <person name="van Montagu M."/>
            <person name="Rogers J."/>
            <person name="Cronin A."/>
            <person name="Quail M.A."/>
            <person name="Bray-Allen S."/>
            <person name="Clark L."/>
            <person name="Doggett J."/>
            <person name="Hall S."/>
            <person name="Kay M."/>
            <person name="Lennard N."/>
            <person name="McLay K."/>
            <person name="Mayes R."/>
            <person name="Pettett A."/>
            <person name="Rajandream M.A."/>
            <person name="Lyne M."/>
            <person name="Benes V."/>
            <person name="Rechmann S."/>
            <person name="Borkova D."/>
            <person name="Bloecker H."/>
            <person name="Scharfe M."/>
            <person name="Grimm M."/>
            <person name="Loehnert T.-H."/>
            <person name="Dose S."/>
            <person name="de Haan M."/>
            <person name="Maarse A.C."/>
            <person name="Schaefer M."/>
            <person name="Mueller-Auer S."/>
            <person name="Gabel C."/>
            <person name="Fuchs M."/>
            <person name="Fartmann B."/>
            <person name="Granderath K."/>
            <person name="Dauner D."/>
            <person name="Herzl A."/>
            <person name="Neumann S."/>
            <person name="Argiriou A."/>
            <person name="Vitale D."/>
            <person name="Liguori R."/>
            <person name="Piravandi E."/>
            <person name="Massenet O."/>
            <person name="Quigley F."/>
            <person name="Clabauld G."/>
            <person name="Muendlein A."/>
            <person name="Felber R."/>
            <person name="Schnabl S."/>
            <person name="Hiller R."/>
            <person name="Schmidt W."/>
            <person name="Lecharny A."/>
            <person name="Aubourg S."/>
            <person name="Chefdor F."/>
            <person name="Cooke R."/>
            <person name="Berger C."/>
            <person name="Monfort A."/>
            <person name="Casacuberta E."/>
            <person name="Gibbons T."/>
            <person name="Weber N."/>
            <person name="Vandenbol M."/>
            <person name="Bargues M."/>
            <person name="Terol J."/>
            <person name="Torres A."/>
            <person name="Perez-Perez A."/>
            <person name="Purnelle B."/>
            <person name="Bent E."/>
            <person name="Johnson S."/>
            <person name="Tacon D."/>
            <person name="Jesse T."/>
            <person name="Heijnen L."/>
            <person name="Schwarz S."/>
            <person name="Scholler P."/>
            <person name="Heber S."/>
            <person name="Francs P."/>
            <person name="Bielke C."/>
            <person name="Frishman D."/>
            <person name="Haase D."/>
            <person name="Lemcke K."/>
            <person name="Mewes H.-W."/>
            <person name="Stocker S."/>
            <person name="Zaccaria P."/>
            <person name="Bevan M."/>
            <person name="Wilson R.K."/>
            <person name="de la Bastide M."/>
            <person name="Habermann K."/>
            <person name="Parnell L."/>
            <person name="Dedhia N."/>
            <person name="Gnoj L."/>
            <person name="Schutz K."/>
            <person name="Huang E."/>
            <person name="Spiegel L."/>
            <person name="Sekhon M."/>
            <person name="Murray J."/>
            <person name="Sheet P."/>
            <person name="Cordes M."/>
            <person name="Abu-Threideh J."/>
            <person name="Stoneking T."/>
            <person name="Kalicki J."/>
            <person name="Graves T."/>
            <person name="Harmon G."/>
            <person name="Edwards J."/>
            <person name="Latreille P."/>
            <person name="Courtney L."/>
            <person name="Cloud J."/>
            <person name="Abbott A."/>
            <person name="Scott K."/>
            <person name="Johnson D."/>
            <person name="Minx P."/>
            <person name="Bentley D."/>
            <person name="Fulton B."/>
            <person name="Miller N."/>
            <person name="Greco T."/>
            <person name="Kemp K."/>
            <person name="Kramer J."/>
            <person name="Fulton L."/>
            <person name="Mardis E."/>
            <person name="Dante M."/>
            <person name="Pepin K."/>
            <person name="Hillier L.W."/>
            <person name="Nelson J."/>
            <person name="Spieth J."/>
            <person name="Ryan E."/>
            <person name="Andrews S."/>
            <person name="Geisel C."/>
            <person name="Layman D."/>
            <person name="Du H."/>
            <person name="Ali J."/>
            <person name="Berghoff A."/>
            <person name="Jones K."/>
            <person name="Drone K."/>
            <person name="Cotton M."/>
            <person name="Joshu C."/>
            <person name="Antonoiu B."/>
            <person name="Zidanic M."/>
            <person name="Strong C."/>
            <person name="Sun H."/>
            <person name="Lamar B."/>
            <person name="Yordan C."/>
            <person name="Ma P."/>
            <person name="Zhong J."/>
            <person name="Preston R."/>
            <person name="Vil D."/>
            <person name="Shekher M."/>
            <person name="Matero A."/>
            <person name="Shah R."/>
            <person name="Swaby I.K."/>
            <person name="O'Shaughnessy A."/>
            <person name="Rodriguez M."/>
            <person name="Hoffman J."/>
            <person name="Till S."/>
            <person name="Granat S."/>
            <person name="Shohdy N."/>
            <person name="Hasegawa A."/>
            <person name="Hameed A."/>
            <person name="Lodhi M."/>
            <person name="Johnson A."/>
            <person name="Chen E."/>
            <person name="Marra M.A."/>
            <person name="Martienssen R."/>
            <person name="McCombie W.R."/>
        </authorList>
    </citation>
    <scope>NUCLEOTIDE SEQUENCE [LARGE SCALE GENOMIC DNA]</scope>
    <source>
        <strain>cv. Columbia</strain>
    </source>
</reference>
<reference key="2">
    <citation type="journal article" date="2017" name="Plant J.">
        <title>Araport11: a complete reannotation of the Arabidopsis thaliana reference genome.</title>
        <authorList>
            <person name="Cheng C.Y."/>
            <person name="Krishnakumar V."/>
            <person name="Chan A.P."/>
            <person name="Thibaud-Nissen F."/>
            <person name="Schobel S."/>
            <person name="Town C.D."/>
        </authorList>
    </citation>
    <scope>GENOME REANNOTATION</scope>
    <source>
        <strain>cv. Columbia</strain>
    </source>
</reference>
<reference key="3">
    <citation type="journal article" date="2003" name="Science">
        <title>Empirical analysis of transcriptional activity in the Arabidopsis genome.</title>
        <authorList>
            <person name="Yamada K."/>
            <person name="Lim J."/>
            <person name="Dale J.M."/>
            <person name="Chen H."/>
            <person name="Shinn P."/>
            <person name="Palm C.J."/>
            <person name="Southwick A.M."/>
            <person name="Wu H.C."/>
            <person name="Kim C.J."/>
            <person name="Nguyen M."/>
            <person name="Pham P.K."/>
            <person name="Cheuk R.F."/>
            <person name="Karlin-Newmann G."/>
            <person name="Liu S.X."/>
            <person name="Lam B."/>
            <person name="Sakano H."/>
            <person name="Wu T."/>
            <person name="Yu G."/>
            <person name="Miranda M."/>
            <person name="Quach H.L."/>
            <person name="Tripp M."/>
            <person name="Chang C.H."/>
            <person name="Lee J.M."/>
            <person name="Toriumi M.J."/>
            <person name="Chan M.M."/>
            <person name="Tang C.C."/>
            <person name="Onodera C.S."/>
            <person name="Deng J.M."/>
            <person name="Akiyama K."/>
            <person name="Ansari Y."/>
            <person name="Arakawa T."/>
            <person name="Banh J."/>
            <person name="Banno F."/>
            <person name="Bowser L."/>
            <person name="Brooks S.Y."/>
            <person name="Carninci P."/>
            <person name="Chao Q."/>
            <person name="Choy N."/>
            <person name="Enju A."/>
            <person name="Goldsmith A.D."/>
            <person name="Gurjal M."/>
            <person name="Hansen N.F."/>
            <person name="Hayashizaki Y."/>
            <person name="Johnson-Hopson C."/>
            <person name="Hsuan V.W."/>
            <person name="Iida K."/>
            <person name="Karnes M."/>
            <person name="Khan S."/>
            <person name="Koesema E."/>
            <person name="Ishida J."/>
            <person name="Jiang P.X."/>
            <person name="Jones T."/>
            <person name="Kawai J."/>
            <person name="Kamiya A."/>
            <person name="Meyers C."/>
            <person name="Nakajima M."/>
            <person name="Narusaka M."/>
            <person name="Seki M."/>
            <person name="Sakurai T."/>
            <person name="Satou M."/>
            <person name="Tamse R."/>
            <person name="Vaysberg M."/>
            <person name="Wallender E.K."/>
            <person name="Wong C."/>
            <person name="Yamamura Y."/>
            <person name="Yuan S."/>
            <person name="Shinozaki K."/>
            <person name="Davis R.W."/>
            <person name="Theologis A."/>
            <person name="Ecker J.R."/>
        </authorList>
    </citation>
    <scope>NUCLEOTIDE SEQUENCE [LARGE SCALE MRNA] (ISOFORM 1)</scope>
    <source>
        <strain>cv. Columbia</strain>
    </source>
</reference>
<reference key="4">
    <citation type="journal article" date="2004" name="Plant Physiol.">
        <title>Identification of genes required for embryo development in Arabidopsis.</title>
        <authorList>
            <person name="Tzafrir I."/>
            <person name="Pena-Muralla R."/>
            <person name="Dickerman A."/>
            <person name="Berg M."/>
            <person name="Rogers R."/>
            <person name="Hutchens S."/>
            <person name="Sweeney T.C."/>
            <person name="McElver J."/>
            <person name="Aux G."/>
            <person name="Patton D."/>
            <person name="Meinke D."/>
        </authorList>
    </citation>
    <scope>DISRUPTION PHENOTYPE [LARGE SCALE ANALYSIS]</scope>
    <source>
        <strain>cv. Columbia</strain>
    </source>
</reference>
<reference key="5">
    <citation type="journal article" date="2017" name="New Phytol.">
        <title>A mRNA methylation in Arabidopsis reveals a role for the conserved E3 ubiquitin ligase HAKAI.</title>
        <authorList>
            <person name="Ruzicka K."/>
            <person name="Zhang M."/>
            <person name="Campilho A."/>
            <person name="Bodi Z."/>
            <person name="Kashif M."/>
            <person name="Saleh M."/>
            <person name="Eeckhout D."/>
            <person name="El-Showk S."/>
            <person name="Li H."/>
            <person name="Zhong S."/>
            <person name="De Jaeger G."/>
            <person name="Mongan N.P."/>
            <person name="Hejatko J."/>
            <person name="Helariutta Y."/>
            <person name="Fray R.G."/>
        </authorList>
    </citation>
    <scope>FUNCTION</scope>
    <scope>IDENTIFICATION BY MASS SPECTROMETRY</scope>
    <scope>HOMODIMERIZATION</scope>
    <scope>INTERACTION WITH HAKAI; MTA AND VIR</scope>
    <scope>SUBCELLULAR LOCATION</scope>
</reference>
<feature type="chain" id="PRO_0000260073" description="N6-adenosine-methyltransferase non-catalytic subunit MTB">
    <location>
        <begin position="1"/>
        <end position="775"/>
    </location>
</feature>
<feature type="region of interest" description="Disordered" evidence="2">
    <location>
        <begin position="1"/>
        <end position="424"/>
    </location>
</feature>
<feature type="region of interest" description="Disordered" evidence="2">
    <location>
        <begin position="520"/>
        <end position="569"/>
    </location>
</feature>
<feature type="compositionally biased region" description="Basic and acidic residues" evidence="2">
    <location>
        <begin position="1"/>
        <end position="10"/>
    </location>
</feature>
<feature type="compositionally biased region" description="Low complexity" evidence="2">
    <location>
        <begin position="40"/>
        <end position="49"/>
    </location>
</feature>
<feature type="compositionally biased region" description="Basic and acidic residues" evidence="2">
    <location>
        <begin position="50"/>
        <end position="79"/>
    </location>
</feature>
<feature type="compositionally biased region" description="Basic and acidic residues" evidence="2">
    <location>
        <begin position="100"/>
        <end position="117"/>
    </location>
</feature>
<feature type="compositionally biased region" description="Basic and acidic residues" evidence="2">
    <location>
        <begin position="125"/>
        <end position="222"/>
    </location>
</feature>
<feature type="compositionally biased region" description="Basic and acidic residues" evidence="2">
    <location>
        <begin position="229"/>
        <end position="278"/>
    </location>
</feature>
<feature type="compositionally biased region" description="Basic and acidic residues" evidence="2">
    <location>
        <begin position="333"/>
        <end position="344"/>
    </location>
</feature>
<feature type="compositionally biased region" description="Polar residues" evidence="2">
    <location>
        <begin position="375"/>
        <end position="400"/>
    </location>
</feature>
<feature type="splice variant" id="VSP_059895" description="In isoform 2.">
    <original>G</original>
    <variation>GSTQKPEDMYRIIEHFALGRRRLELFGEDHNIRAGWLTVGKGLSSSNFEPQAYVRNFADKEGKVWLGGGGRNPPPDAPHLVVTTPDIESLRPKSPMKNQQQQSYPSSLASANSSNRRTTGNSPQANPNVVVLHQEASGSNFSVPTTPHWVPPTAPAAAGPPPMDSFRVPEGGNNTRPPDDKSFDMYGFN</variation>
    <location>
        <position position="775"/>
    </location>
</feature>
<dbReference type="EMBL" id="AL049481">
    <property type="protein sequence ID" value="CAB39622.1"/>
    <property type="molecule type" value="Genomic_DNA"/>
</dbReference>
<dbReference type="EMBL" id="AL161516">
    <property type="protein sequence ID" value="CAB78121.1"/>
    <property type="molecule type" value="Genomic_DNA"/>
</dbReference>
<dbReference type="EMBL" id="CP002687">
    <property type="protein sequence ID" value="AEE82823.1"/>
    <property type="molecule type" value="Genomic_DNA"/>
</dbReference>
<dbReference type="EMBL" id="CP002687">
    <property type="protein sequence ID" value="AEE82824.1"/>
    <property type="molecule type" value="Genomic_DNA"/>
</dbReference>
<dbReference type="EMBL" id="AY046016">
    <property type="protein sequence ID" value="AAK76690.1"/>
    <property type="molecule type" value="mRNA"/>
</dbReference>
<dbReference type="EMBL" id="BT000992">
    <property type="protein sequence ID" value="AAN41392.1"/>
    <property type="molecule type" value="mRNA"/>
</dbReference>
<dbReference type="PIR" id="T04002">
    <property type="entry name" value="T04002"/>
</dbReference>
<dbReference type="RefSeq" id="NP_001078365.1">
    <molecule id="Q94AI4-1"/>
    <property type="nucleotide sequence ID" value="NM_001084896.2"/>
</dbReference>
<dbReference type="RefSeq" id="NP_567348.2">
    <molecule id="Q94AI4-2"/>
    <property type="nucleotide sequence ID" value="NM_117066.4"/>
</dbReference>
<dbReference type="SMR" id="Q94AI4"/>
<dbReference type="BioGRID" id="11888">
    <property type="interactions" value="1"/>
</dbReference>
<dbReference type="FunCoup" id="Q94AI4">
    <property type="interactions" value="1423"/>
</dbReference>
<dbReference type="IntAct" id="Q94AI4">
    <property type="interactions" value="1"/>
</dbReference>
<dbReference type="STRING" id="3702.Q94AI4"/>
<dbReference type="iPTMnet" id="Q94AI4"/>
<dbReference type="PaxDb" id="3702-AT4G09980.1"/>
<dbReference type="ProteomicsDB" id="232275">
    <molecule id="Q94AI4-1"/>
</dbReference>
<dbReference type="EnsemblPlants" id="AT4G09980.1">
    <molecule id="Q94AI4-2"/>
    <property type="protein sequence ID" value="AT4G09980.1"/>
    <property type="gene ID" value="AT4G09980"/>
</dbReference>
<dbReference type="EnsemblPlants" id="AT4G09980.2">
    <molecule id="Q94AI4-1"/>
    <property type="protein sequence ID" value="AT4G09980.2"/>
    <property type="gene ID" value="AT4G09980"/>
</dbReference>
<dbReference type="GeneID" id="826589"/>
<dbReference type="Gramene" id="AT4G09980.1">
    <molecule id="Q94AI4-2"/>
    <property type="protein sequence ID" value="AT4G09980.1"/>
    <property type="gene ID" value="AT4G09980"/>
</dbReference>
<dbReference type="Gramene" id="AT4G09980.2">
    <molecule id="Q94AI4-1"/>
    <property type="protein sequence ID" value="AT4G09980.2"/>
    <property type="gene ID" value="AT4G09980"/>
</dbReference>
<dbReference type="KEGG" id="ath:AT4G09980"/>
<dbReference type="Araport" id="AT4G09980"/>
<dbReference type="TAIR" id="AT4G09980">
    <property type="gene designation" value="EMB1691"/>
</dbReference>
<dbReference type="eggNOG" id="KOG2097">
    <property type="taxonomic scope" value="Eukaryota"/>
</dbReference>
<dbReference type="HOGENOM" id="CLU_006673_0_0_1"/>
<dbReference type="InParanoid" id="Q94AI4"/>
<dbReference type="OMA" id="WAYMQEN"/>
<dbReference type="PhylomeDB" id="Q94AI4"/>
<dbReference type="PRO" id="PR:Q94AI4"/>
<dbReference type="Proteomes" id="UP000006548">
    <property type="component" value="Chromosome 4"/>
</dbReference>
<dbReference type="ExpressionAtlas" id="Q94AI4">
    <property type="expression patterns" value="baseline and differential"/>
</dbReference>
<dbReference type="GO" id="GO:0016607">
    <property type="term" value="C:nuclear speck"/>
    <property type="evidence" value="ECO:0007669"/>
    <property type="project" value="UniProtKB-SubCell"/>
</dbReference>
<dbReference type="GO" id="GO:0036396">
    <property type="term" value="C:RNA N6-methyladenosine methyltransferase complex"/>
    <property type="evidence" value="ECO:0000315"/>
    <property type="project" value="UniProtKB"/>
</dbReference>
<dbReference type="GO" id="GO:0008168">
    <property type="term" value="F:methyltransferase activity"/>
    <property type="evidence" value="ECO:0007669"/>
    <property type="project" value="InterPro"/>
</dbReference>
<dbReference type="GO" id="GO:0003723">
    <property type="term" value="F:RNA binding"/>
    <property type="evidence" value="ECO:0007669"/>
    <property type="project" value="UniProtKB-KW"/>
</dbReference>
<dbReference type="GO" id="GO:0009793">
    <property type="term" value="P:embryo development ending in seed dormancy"/>
    <property type="evidence" value="ECO:0000315"/>
    <property type="project" value="UniProtKB"/>
</dbReference>
<dbReference type="GO" id="GO:0032259">
    <property type="term" value="P:methylation"/>
    <property type="evidence" value="ECO:0007669"/>
    <property type="project" value="InterPro"/>
</dbReference>
<dbReference type="InterPro" id="IPR002052">
    <property type="entry name" value="DNA_methylase_N6_adenine_CS"/>
</dbReference>
<dbReference type="InterPro" id="IPR045123">
    <property type="entry name" value="METTL14-like"/>
</dbReference>
<dbReference type="InterPro" id="IPR007757">
    <property type="entry name" value="MT-A70-like"/>
</dbReference>
<dbReference type="InterPro" id="IPR029063">
    <property type="entry name" value="SAM-dependent_MTases_sf"/>
</dbReference>
<dbReference type="PANTHER" id="PTHR13107">
    <property type="entry name" value="N6-ADENOSINE-METHYLTRANSFERASE NON-CATALYTIC SUBUNIT"/>
    <property type="match status" value="1"/>
</dbReference>
<dbReference type="PANTHER" id="PTHR13107:SF0">
    <property type="entry name" value="N6-ADENOSINE-METHYLTRANSFERASE NON-CATALYTIC SUBUNIT"/>
    <property type="match status" value="1"/>
</dbReference>
<dbReference type="Pfam" id="PF05063">
    <property type="entry name" value="MT-A70"/>
    <property type="match status" value="1"/>
</dbReference>
<dbReference type="SUPFAM" id="SSF53335">
    <property type="entry name" value="S-adenosyl-L-methionine-dependent methyltransferases"/>
    <property type="match status" value="1"/>
</dbReference>
<dbReference type="PROSITE" id="PS51143">
    <property type="entry name" value="MT_A70"/>
    <property type="match status" value="1"/>
</dbReference>
<dbReference type="PROSITE" id="PS00092">
    <property type="entry name" value="N6_MTASE"/>
    <property type="match status" value="1"/>
</dbReference>
<dbReference type="PROSITE" id="PS51592">
    <property type="entry name" value="SAM_MTA70L_2"/>
    <property type="match status" value="1"/>
</dbReference>
<sequence length="775" mass="85846">MKKKQEESSLEKLSTWYQDGEQDGGDRSEKRRMSLKASDFESSSRSGGSKSKEDNKSVVDVEHQDRDSKRERDGRERTHGSSSDSSKRKRWDEAGGLVNDGDHKSSKLSDSRHDSGGERVSVSNEHGESRRDLKSDRSLKTSSRDEKSKSRGVKDDDRGSPLKKTSGKDGSEVVREVGRSNRSKTPDADYEKEKYSRKDERSRGRDDGWSDRDRDQEGLKDNWKRRHSSSGDKDQKDGDLLYDRGREREFPRQGRERSEGERSHGRLGGRKDGNRGEAVKALSSGGVSNENYDVIEIQTKPHDYVRGESGPNFARMTESGQQPPKKPSNNEEEWAHNQEGRQRSETFGFGSYGEDSRDEAGEASSDYSGAKARNQRGSTPGRTNFVQTPNRGYQTPQGTRGNRPLRGGKGRPAGGRENQQGAIPMPIMGSPFANLGMPPPSPIHSLTPGMSPIPGTSVTPVFMPPFAPTLIWPGARGVDGNMLPVPPVLSPLPPGPSGPRFPSIGTPPNPNMFFTPPGSDRGGPPNFPGSNISGQMGRGMPSDKTSGGWVPPRGGGPPGKAPSRGEQNDYSQNFVDTGMRPQNFIRELELTNVEDYPKLRELIQKKDEIVSNSASAPMYLKGDLHEVELSPELFGTKFDVILVDPPWEEYVHRAPGVSDSMEYWTFEDIINLKIEAIADTPSFLFLWVGDGVGLEQGRQCLKKWGFRRCEDICWVKTNKSNAAPTLRHDSRTVFQRSKEHCLMGIKGTVRRSTDGHIIHANIDTDVIIAEEPPYG</sequence>
<name>METL1_ARATH</name>
<evidence type="ECO:0000255" key="1">
    <source>
        <dbReference type="PROSITE-ProRule" id="PRU00489"/>
    </source>
</evidence>
<evidence type="ECO:0000256" key="2">
    <source>
        <dbReference type="SAM" id="MobiDB-lite"/>
    </source>
</evidence>
<evidence type="ECO:0000269" key="3">
    <source>
    </source>
</evidence>
<evidence type="ECO:0000269" key="4">
    <source>
    </source>
</evidence>
<evidence type="ECO:0000303" key="5">
    <source>
    </source>
</evidence>
<evidence type="ECO:0000303" key="6">
    <source>
    </source>
</evidence>
<evidence type="ECO:0000305" key="7"/>
<evidence type="ECO:0000312" key="8">
    <source>
        <dbReference type="Araport" id="AT4G09980"/>
    </source>
</evidence>
<evidence type="ECO:0000312" key="9">
    <source>
        <dbReference type="EMBL" id="CAB39622.1"/>
    </source>
</evidence>
<comment type="function">
    <text evidence="4">Probable non-catalytic subunit of the N6-methyltransferase complex, a multiprotein complex that mediates N6-methyladenosine (m6A) methylation at the 5'-[AG]GAC-3' consensus sites of some mRNAs (PubMed:28503769). Associates with MTA, FIP37, VIR and HAKAI to form the m6A writer complex which is essential for adenosine methylation at specific mRNA sequences (PubMed:28503769). N6-methyladenosine (m6A) plays a role in mRNA stability, processing, translation efficiency and editing (PubMed:28503769).</text>
</comment>
<comment type="subunit">
    <text evidence="4">Forms homodimers (PubMed:28503769). Interacts with HAKAI, MTA and VIR (PubMed:28503769). Associates with MTA, FIP37, VIR and HAKAI to form the m6A writer complex which is essential for adenosine methylation at specific mRNA sequences (PubMed:28503769).</text>
</comment>
<comment type="subcellular location">
    <subcellularLocation>
        <location evidence="4">Nucleus speckle</location>
    </subcellularLocation>
    <subcellularLocation>
        <location evidence="4">Nucleus</location>
        <location evidence="4">Nucleoplasm</location>
    </subcellularLocation>
</comment>
<comment type="alternative products">
    <event type="alternative splicing"/>
    <isoform>
        <id>Q94AI4-1</id>
        <name>1</name>
        <sequence type="displayed"/>
    </isoform>
    <isoform>
        <id>Q94AI4-2</id>
        <name>2</name>
        <sequence type="described" ref="VSP_059895"/>
    </isoform>
</comment>
<comment type="disruption phenotype">
    <text evidence="3">Embryonic lethality: arrest at the globular stage of embryo development.</text>
</comment>
<comment type="similarity">
    <text evidence="1">Belongs to the MT-A70-like family.</text>
</comment>
<organism>
    <name type="scientific">Arabidopsis thaliana</name>
    <name type="common">Mouse-ear cress</name>
    <dbReference type="NCBI Taxonomy" id="3702"/>
    <lineage>
        <taxon>Eukaryota</taxon>
        <taxon>Viridiplantae</taxon>
        <taxon>Streptophyta</taxon>
        <taxon>Embryophyta</taxon>
        <taxon>Tracheophyta</taxon>
        <taxon>Spermatophyta</taxon>
        <taxon>Magnoliopsida</taxon>
        <taxon>eudicotyledons</taxon>
        <taxon>Gunneridae</taxon>
        <taxon>Pentapetalae</taxon>
        <taxon>rosids</taxon>
        <taxon>malvids</taxon>
        <taxon>Brassicales</taxon>
        <taxon>Brassicaceae</taxon>
        <taxon>Camelineae</taxon>
        <taxon>Arabidopsis</taxon>
    </lineage>
</organism>
<protein>
    <recommendedName>
        <fullName evidence="7">N6-adenosine-methyltransferase non-catalytic subunit MTB</fullName>
    </recommendedName>
    <alternativeName>
        <fullName evidence="7">Methyltransferase-like protein 1</fullName>
    </alternativeName>
    <alternativeName>
        <fullName evidence="5">Protein EMBRYO DEFECTIVE 1691</fullName>
    </alternativeName>
    <alternativeName>
        <fullName evidence="6">Protein METTL14 homolog</fullName>
    </alternativeName>
</protein>
<proteinExistence type="evidence at protein level"/>
<gene>
    <name evidence="6" type="primary">MTB</name>
    <name evidence="5" type="synonym">EMB1691</name>
    <name evidence="8" type="ordered locus">At4g09980</name>
    <name evidence="9" type="ORF">T5L19.110</name>
</gene>
<keyword id="KW-0025">Alternative splicing</keyword>
<keyword id="KW-0539">Nucleus</keyword>
<keyword id="KW-1185">Reference proteome</keyword>
<keyword id="KW-0694">RNA-binding</keyword>
<accession>Q94AI4</accession>
<accession>F4JKV6</accession>
<accession>Q9T0F6</accession>